<sequence>MATKFPSFSQGLAQDPTTRRIWYGIATAHDFESHDGMTEEQLYQKLFSTHFGHLAIIGLWVAGNLFHIAWQGNFEQWVLDPLHTRPIAHAIWDPHFGQGLTDALTQAGATSPVNIAYSGLYHWWYTIGMRTNEQLFQGAIFINILVCWLLFAGWLHLQPKYRPSLAWFKNAESQLNHHLAVLFGFSSIAWTGHLIHVAIPESRGIHVGWENWLTVMPHPEGLTPFFSGNWGAYAQNPDSIDAVFGTSQGAGTAIFTFLGGLHPQSESLWLTDIAHHHLAIGVVFIIAGHMYRTNFGIGHSLKEIIEAHNTSHPKDPHRGYFGIKHNGLFETVNNSLHFQLGLALASLGVACSLVAQHMGALPSYAFIARDYTTQSALYTHHQYIAMFLMVGAFSHGAIFFVRDYDPELNKDNVLARILSTKEALISHLSWVTMLLGFHTLGIYVHNDVVVAFGTPEKQILIEPVFAQFAQAASGKMMYGFNALLANASSSASIAANSMPGNHYWMDMINRPDALTNFLPIGPADFLVHHAIALGLHTTALILIKGALDARGTKLIPDKKDLGFAFPCDGPGRGGTCDSSSWDATYLAMFWALNTIAWITFYWHWKHLAIWMGNTAQFNESGTYLMGWFRDYLWLNSSQLINGYNPFGVNALSPWAWMFLFGHLIWATGFMFLISWRGYWQELIETLVWAHQRTPIANLVGWRDKPVALSIVQARLVGLTHFTVGNFVTFGAFVIASTSGKFG</sequence>
<gene>
    <name evidence="1" type="primary">psaB</name>
    <name type="ordered locus">NATL1_19581</name>
</gene>
<feature type="chain" id="PRO_0000300021" description="Photosystem I P700 chlorophyll a apoprotein A2">
    <location>
        <begin position="1"/>
        <end position="742"/>
    </location>
</feature>
<feature type="transmembrane region" description="Helical; Name=I" evidence="1">
    <location>
        <begin position="46"/>
        <end position="69"/>
    </location>
</feature>
<feature type="transmembrane region" description="Helical; Name=II" evidence="1">
    <location>
        <begin position="135"/>
        <end position="158"/>
    </location>
</feature>
<feature type="transmembrane region" description="Helical; Name=III" evidence="1">
    <location>
        <begin position="175"/>
        <end position="199"/>
    </location>
</feature>
<feature type="transmembrane region" description="Helical; Name=IV" evidence="1">
    <location>
        <begin position="273"/>
        <end position="291"/>
    </location>
</feature>
<feature type="transmembrane region" description="Helical; Name=V" evidence="1">
    <location>
        <begin position="336"/>
        <end position="359"/>
    </location>
</feature>
<feature type="transmembrane region" description="Helical; Name=VI" evidence="1">
    <location>
        <begin position="375"/>
        <end position="401"/>
    </location>
</feature>
<feature type="transmembrane region" description="Helical; Name=VII" evidence="1">
    <location>
        <begin position="423"/>
        <end position="445"/>
    </location>
</feature>
<feature type="transmembrane region" description="Helical; Name=VIII" evidence="1">
    <location>
        <begin position="525"/>
        <end position="543"/>
    </location>
</feature>
<feature type="transmembrane region" description="Helical; Name=IX" evidence="1">
    <location>
        <begin position="583"/>
        <end position="604"/>
    </location>
</feature>
<feature type="transmembrane region" description="Helical; Name=X" evidence="1">
    <location>
        <begin position="651"/>
        <end position="673"/>
    </location>
</feature>
<feature type="transmembrane region" description="Helical; Name=XI" evidence="1">
    <location>
        <begin position="715"/>
        <end position="735"/>
    </location>
</feature>
<feature type="binding site" evidence="1">
    <location>
        <position position="567"/>
    </location>
    <ligand>
        <name>[4Fe-4S] cluster</name>
        <dbReference type="ChEBI" id="CHEBI:49883"/>
        <note>ligand shared between dimeric partners</note>
    </ligand>
</feature>
<feature type="binding site" evidence="1">
    <location>
        <position position="576"/>
    </location>
    <ligand>
        <name>[4Fe-4S] cluster</name>
        <dbReference type="ChEBI" id="CHEBI:49883"/>
        <note>ligand shared between dimeric partners</note>
    </ligand>
</feature>
<feature type="binding site" description="axial binding residue" evidence="1">
    <location>
        <position position="662"/>
    </location>
    <ligand>
        <name>divinyl chlorophyll a</name>
        <dbReference type="ChEBI" id="CHEBI:73095"/>
        <label>B1</label>
    </ligand>
    <ligandPart>
        <name>Mg</name>
        <dbReference type="ChEBI" id="CHEBI:25107"/>
    </ligandPart>
</feature>
<feature type="binding site" description="axial binding residue" evidence="1">
    <location>
        <position position="670"/>
    </location>
    <ligand>
        <name>divinyl chlorophyll a</name>
        <dbReference type="ChEBI" id="CHEBI:73095"/>
        <label>B3</label>
    </ligand>
    <ligandPart>
        <name>Mg</name>
        <dbReference type="ChEBI" id="CHEBI:25107"/>
    </ligandPart>
</feature>
<feature type="binding site" evidence="1">
    <location>
        <position position="678"/>
    </location>
    <ligand>
        <name>divinyl chlorophyll a</name>
        <dbReference type="ChEBI" id="CHEBI:73095"/>
        <label>B3</label>
    </ligand>
</feature>
<feature type="binding site" evidence="1">
    <location>
        <position position="679"/>
    </location>
    <ligand>
        <name>phylloquinone</name>
        <dbReference type="ChEBI" id="CHEBI:18067"/>
        <label>B</label>
    </ligand>
</feature>
<accession>A2C4V4</accession>
<evidence type="ECO:0000255" key="1">
    <source>
        <dbReference type="HAMAP-Rule" id="MF_00482"/>
    </source>
</evidence>
<dbReference type="EC" id="1.97.1.12" evidence="1"/>
<dbReference type="EMBL" id="CP000553">
    <property type="protein sequence ID" value="ABM76514.1"/>
    <property type="molecule type" value="Genomic_DNA"/>
</dbReference>
<dbReference type="RefSeq" id="WP_011295427.1">
    <property type="nucleotide sequence ID" value="NC_008819.1"/>
</dbReference>
<dbReference type="SMR" id="A2C4V4"/>
<dbReference type="KEGG" id="pme:NATL1_19581"/>
<dbReference type="eggNOG" id="COG2885">
    <property type="taxonomic scope" value="Bacteria"/>
</dbReference>
<dbReference type="HOGENOM" id="CLU_016126_1_0_3"/>
<dbReference type="Proteomes" id="UP000002592">
    <property type="component" value="Chromosome"/>
</dbReference>
<dbReference type="GO" id="GO:0009522">
    <property type="term" value="C:photosystem I"/>
    <property type="evidence" value="ECO:0007669"/>
    <property type="project" value="UniProtKB-KW"/>
</dbReference>
<dbReference type="GO" id="GO:0031676">
    <property type="term" value="C:plasma membrane-derived thylakoid membrane"/>
    <property type="evidence" value="ECO:0007669"/>
    <property type="project" value="UniProtKB-SubCell"/>
</dbReference>
<dbReference type="GO" id="GO:0051539">
    <property type="term" value="F:4 iron, 4 sulfur cluster binding"/>
    <property type="evidence" value="ECO:0007669"/>
    <property type="project" value="UniProtKB-KW"/>
</dbReference>
<dbReference type="GO" id="GO:0016168">
    <property type="term" value="F:chlorophyll binding"/>
    <property type="evidence" value="ECO:0007669"/>
    <property type="project" value="UniProtKB-KW"/>
</dbReference>
<dbReference type="GO" id="GO:0009055">
    <property type="term" value="F:electron transfer activity"/>
    <property type="evidence" value="ECO:0007669"/>
    <property type="project" value="UniProtKB-UniRule"/>
</dbReference>
<dbReference type="GO" id="GO:0000287">
    <property type="term" value="F:magnesium ion binding"/>
    <property type="evidence" value="ECO:0007669"/>
    <property type="project" value="UniProtKB-UniRule"/>
</dbReference>
<dbReference type="GO" id="GO:0016491">
    <property type="term" value="F:oxidoreductase activity"/>
    <property type="evidence" value="ECO:0007669"/>
    <property type="project" value="UniProtKB-KW"/>
</dbReference>
<dbReference type="GO" id="GO:0015979">
    <property type="term" value="P:photosynthesis"/>
    <property type="evidence" value="ECO:0007669"/>
    <property type="project" value="UniProtKB-UniRule"/>
</dbReference>
<dbReference type="FunFam" id="1.20.1130.10:FF:000001">
    <property type="entry name" value="Photosystem I P700 chlorophyll a apoprotein A2"/>
    <property type="match status" value="1"/>
</dbReference>
<dbReference type="Gene3D" id="1.20.1130.10">
    <property type="entry name" value="Photosystem I PsaA/PsaB"/>
    <property type="match status" value="1"/>
</dbReference>
<dbReference type="HAMAP" id="MF_00482">
    <property type="entry name" value="PSI_PsaB"/>
    <property type="match status" value="1"/>
</dbReference>
<dbReference type="InterPro" id="IPR001280">
    <property type="entry name" value="PSI_PsaA/B"/>
</dbReference>
<dbReference type="InterPro" id="IPR020586">
    <property type="entry name" value="PSI_PsaA/B_CS"/>
</dbReference>
<dbReference type="InterPro" id="IPR036408">
    <property type="entry name" value="PSI_PsaA/B_sf"/>
</dbReference>
<dbReference type="InterPro" id="IPR006244">
    <property type="entry name" value="PSI_PsaB"/>
</dbReference>
<dbReference type="NCBIfam" id="TIGR01336">
    <property type="entry name" value="psaB"/>
    <property type="match status" value="1"/>
</dbReference>
<dbReference type="PANTHER" id="PTHR30128">
    <property type="entry name" value="OUTER MEMBRANE PROTEIN, OMPA-RELATED"/>
    <property type="match status" value="1"/>
</dbReference>
<dbReference type="PANTHER" id="PTHR30128:SF19">
    <property type="entry name" value="PHOTOSYSTEM I P700 CHLOROPHYLL A APOPROTEIN A1-RELATED"/>
    <property type="match status" value="1"/>
</dbReference>
<dbReference type="Pfam" id="PF00223">
    <property type="entry name" value="PsaA_PsaB"/>
    <property type="match status" value="1"/>
</dbReference>
<dbReference type="PIRSF" id="PIRSF002905">
    <property type="entry name" value="PSI_A"/>
    <property type="match status" value="1"/>
</dbReference>
<dbReference type="PRINTS" id="PR00257">
    <property type="entry name" value="PHOTSYSPSAAB"/>
</dbReference>
<dbReference type="SUPFAM" id="SSF81558">
    <property type="entry name" value="Photosystem I subunits PsaA/PsaB"/>
    <property type="match status" value="1"/>
</dbReference>
<dbReference type="PROSITE" id="PS00419">
    <property type="entry name" value="PHOTOSYSTEM_I_PSAAB"/>
    <property type="match status" value="1"/>
</dbReference>
<proteinExistence type="inferred from homology"/>
<organism>
    <name type="scientific">Prochlorococcus marinus (strain NATL1A)</name>
    <dbReference type="NCBI Taxonomy" id="167555"/>
    <lineage>
        <taxon>Bacteria</taxon>
        <taxon>Bacillati</taxon>
        <taxon>Cyanobacteriota</taxon>
        <taxon>Cyanophyceae</taxon>
        <taxon>Synechococcales</taxon>
        <taxon>Prochlorococcaceae</taxon>
        <taxon>Prochlorococcus</taxon>
    </lineage>
</organism>
<reference key="1">
    <citation type="journal article" date="2007" name="PLoS Genet.">
        <title>Patterns and implications of gene gain and loss in the evolution of Prochlorococcus.</title>
        <authorList>
            <person name="Kettler G.C."/>
            <person name="Martiny A.C."/>
            <person name="Huang K."/>
            <person name="Zucker J."/>
            <person name="Coleman M.L."/>
            <person name="Rodrigue S."/>
            <person name="Chen F."/>
            <person name="Lapidus A."/>
            <person name="Ferriera S."/>
            <person name="Johnson J."/>
            <person name="Steglich C."/>
            <person name="Church G.M."/>
            <person name="Richardson P."/>
            <person name="Chisholm S.W."/>
        </authorList>
    </citation>
    <scope>NUCLEOTIDE SEQUENCE [LARGE SCALE GENOMIC DNA]</scope>
    <source>
        <strain>NATL1A</strain>
    </source>
</reference>
<keyword id="KW-0004">4Fe-4S</keyword>
<keyword id="KW-0148">Chlorophyll</keyword>
<keyword id="KW-0157">Chromophore</keyword>
<keyword id="KW-0249">Electron transport</keyword>
<keyword id="KW-0408">Iron</keyword>
<keyword id="KW-0411">Iron-sulfur</keyword>
<keyword id="KW-0460">Magnesium</keyword>
<keyword id="KW-0472">Membrane</keyword>
<keyword id="KW-0479">Metal-binding</keyword>
<keyword id="KW-0560">Oxidoreductase</keyword>
<keyword id="KW-0602">Photosynthesis</keyword>
<keyword id="KW-0603">Photosystem I</keyword>
<keyword id="KW-0793">Thylakoid</keyword>
<keyword id="KW-0812">Transmembrane</keyword>
<keyword id="KW-1133">Transmembrane helix</keyword>
<keyword id="KW-0813">Transport</keyword>
<name>PSAB_PROM1</name>
<protein>
    <recommendedName>
        <fullName evidence="1">Photosystem I P700 chlorophyll a apoprotein A2</fullName>
        <ecNumber evidence="1">1.97.1.12</ecNumber>
    </recommendedName>
    <alternativeName>
        <fullName evidence="1">PsaB</fullName>
    </alternativeName>
</protein>
<comment type="function">
    <text evidence="1">PsaA and PsaB bind P700, the primary electron donor of photosystem I (PSI), as well as the electron acceptors A0, A1 and FX. PSI is a plastocyanin/cytochrome c6-ferredoxin oxidoreductase, converting photonic excitation into a charge separation, which transfers an electron from the donor P700 chlorophyll pair to the spectroscopically characterized acceptors A0, A1, FX, FA and FB in turn. Oxidized P700 is reduced on the lumenal side of the thylakoid membrane by plastocyanin or cytochrome c6.</text>
</comment>
<comment type="catalytic activity">
    <reaction evidence="1">
        <text>reduced [plastocyanin] + hnu + oxidized [2Fe-2S]-[ferredoxin] = oxidized [plastocyanin] + reduced [2Fe-2S]-[ferredoxin]</text>
        <dbReference type="Rhea" id="RHEA:30407"/>
        <dbReference type="Rhea" id="RHEA-COMP:10000"/>
        <dbReference type="Rhea" id="RHEA-COMP:10001"/>
        <dbReference type="Rhea" id="RHEA-COMP:10039"/>
        <dbReference type="Rhea" id="RHEA-COMP:10040"/>
        <dbReference type="ChEBI" id="CHEBI:29036"/>
        <dbReference type="ChEBI" id="CHEBI:30212"/>
        <dbReference type="ChEBI" id="CHEBI:33737"/>
        <dbReference type="ChEBI" id="CHEBI:33738"/>
        <dbReference type="ChEBI" id="CHEBI:49552"/>
        <dbReference type="EC" id="1.97.1.12"/>
    </reaction>
</comment>
<comment type="cofactor">
    <text evidence="1">PSI electron transfer chain: 5 divinyl chlorophyll a, 1 divinyl chlorophyll a', 2 phylloquinones and 3 4Fe-4S clusters. PSI core antenna: 90 divinyl chlorophyll a, 22 carotenoids, 3 phospholipids and 1 galactolipid. P700 is a divinyl chlorophyll a/divinyl chlorophyll a' dimer, A0 is one or more divinyl chlorophyll a, A1 is one or both phylloquinones and FX is a shared 4Fe-4S iron-sulfur center.</text>
</comment>
<comment type="subunit">
    <text evidence="1">The PsaA/B heterodimer binds the P700 divinyl chlorophyll special pair and subsequent electron acceptors. PSI consists of a core antenna complex that captures photons, and an electron transfer chain that converts photonic excitation into a charge separation. The cyanobacterial PSI reaction center is composed of one copy each of PsaA,B,C,D,E,F,I,J,K,L,M and X, and forms trimeric complexes.</text>
</comment>
<comment type="subcellular location">
    <subcellularLocation>
        <location evidence="1">Cellular thylakoid membrane</location>
        <topology evidence="1">Multi-pass membrane protein</topology>
    </subcellularLocation>
</comment>
<comment type="similarity">
    <text evidence="1">Belongs to the PsaA/PsaB family.</text>
</comment>